<reference key="1">
    <citation type="journal article" date="2011" name="J. Bacteriol.">
        <title>Comparative genomics of 28 Salmonella enterica isolates: evidence for CRISPR-mediated adaptive sublineage evolution.</title>
        <authorList>
            <person name="Fricke W.F."/>
            <person name="Mammel M.K."/>
            <person name="McDermott P.F."/>
            <person name="Tartera C."/>
            <person name="White D.G."/>
            <person name="Leclerc J.E."/>
            <person name="Ravel J."/>
            <person name="Cebula T.A."/>
        </authorList>
    </citation>
    <scope>NUCLEOTIDE SEQUENCE [LARGE SCALE GENOMIC DNA]</scope>
    <source>
        <strain>SL254</strain>
    </source>
</reference>
<comment type="function">
    <text evidence="1">Involved in iron-sulfur cluster biogenesis. Binds a 4Fe-4S cluster, can transfer this cluster to apoproteins, and thereby intervenes in the maturation of Fe/S proteins. Could also act as a scaffold/chaperone for damaged Fe/S proteins.</text>
</comment>
<comment type="cofactor">
    <cofactor evidence="1">
        <name>[4Fe-4S] cluster</name>
        <dbReference type="ChEBI" id="CHEBI:49883"/>
    </cofactor>
    <text evidence="1">Binds 1 [4Fe-4S] cluster per subunit. The cluster is presumably bound at the interface of two monomers.</text>
</comment>
<comment type="subunit">
    <text evidence="1">Homodimer.</text>
</comment>
<comment type="similarity">
    <text evidence="1">Belongs to the NfuA family.</text>
</comment>
<protein>
    <recommendedName>
        <fullName evidence="1">Fe/S biogenesis protein NfuA</fullName>
    </recommendedName>
</protein>
<evidence type="ECO:0000255" key="1">
    <source>
        <dbReference type="HAMAP-Rule" id="MF_01637"/>
    </source>
</evidence>
<feature type="chain" id="PRO_1000186775" description="Fe/S biogenesis protein NfuA">
    <location>
        <begin position="1"/>
        <end position="191"/>
    </location>
</feature>
<feature type="binding site" evidence="1">
    <location>
        <position position="149"/>
    </location>
    <ligand>
        <name>[4Fe-4S] cluster</name>
        <dbReference type="ChEBI" id="CHEBI:49883"/>
    </ligand>
</feature>
<feature type="binding site" evidence="1">
    <location>
        <position position="152"/>
    </location>
    <ligand>
        <name>[4Fe-4S] cluster</name>
        <dbReference type="ChEBI" id="CHEBI:49883"/>
    </ligand>
</feature>
<proteinExistence type="inferred from homology"/>
<keyword id="KW-0004">4Fe-4S</keyword>
<keyword id="KW-0408">Iron</keyword>
<keyword id="KW-0411">Iron-sulfur</keyword>
<keyword id="KW-0479">Metal-binding</keyword>
<dbReference type="EMBL" id="CP001113">
    <property type="protein sequence ID" value="ACF64080.1"/>
    <property type="molecule type" value="Genomic_DNA"/>
</dbReference>
<dbReference type="RefSeq" id="WP_000619387.1">
    <property type="nucleotide sequence ID" value="NZ_CCMR01000004.1"/>
</dbReference>
<dbReference type="SMR" id="B4SVL5"/>
<dbReference type="GeneID" id="66757844"/>
<dbReference type="KEGG" id="see:SNSL254_A3785"/>
<dbReference type="HOGENOM" id="CLU_094569_0_0_6"/>
<dbReference type="Proteomes" id="UP000008824">
    <property type="component" value="Chromosome"/>
</dbReference>
<dbReference type="GO" id="GO:0051539">
    <property type="term" value="F:4 iron, 4 sulfur cluster binding"/>
    <property type="evidence" value="ECO:0007669"/>
    <property type="project" value="UniProtKB-UniRule"/>
</dbReference>
<dbReference type="GO" id="GO:0005506">
    <property type="term" value="F:iron ion binding"/>
    <property type="evidence" value="ECO:0007669"/>
    <property type="project" value="InterPro"/>
</dbReference>
<dbReference type="GO" id="GO:0016226">
    <property type="term" value="P:iron-sulfur cluster assembly"/>
    <property type="evidence" value="ECO:0007669"/>
    <property type="project" value="UniProtKB-UniRule"/>
</dbReference>
<dbReference type="GO" id="GO:0051604">
    <property type="term" value="P:protein maturation"/>
    <property type="evidence" value="ECO:0007669"/>
    <property type="project" value="UniProtKB-UniRule"/>
</dbReference>
<dbReference type="FunFam" id="2.60.300.12:FF:000004">
    <property type="entry name" value="Fe/S biogenesis protein NfuA"/>
    <property type="match status" value="1"/>
</dbReference>
<dbReference type="FunFam" id="3.30.300.130:FF:000002">
    <property type="entry name" value="Fe/S biogenesis protein NfuA"/>
    <property type="match status" value="1"/>
</dbReference>
<dbReference type="Gene3D" id="3.30.300.130">
    <property type="entry name" value="Fe-S cluster assembly (FSCA)"/>
    <property type="match status" value="1"/>
</dbReference>
<dbReference type="Gene3D" id="2.60.300.12">
    <property type="entry name" value="HesB-like domain"/>
    <property type="match status" value="1"/>
</dbReference>
<dbReference type="HAMAP" id="MF_01637">
    <property type="entry name" value="Fe_S_biogen_NfuA"/>
    <property type="match status" value="1"/>
</dbReference>
<dbReference type="InterPro" id="IPR017726">
    <property type="entry name" value="Fe/S_biogenesis_protein_NfuA"/>
</dbReference>
<dbReference type="InterPro" id="IPR000361">
    <property type="entry name" value="FeS_biogenesis"/>
</dbReference>
<dbReference type="InterPro" id="IPR034904">
    <property type="entry name" value="FSCA_dom_sf"/>
</dbReference>
<dbReference type="InterPro" id="IPR035903">
    <property type="entry name" value="HesB-like_dom_sf"/>
</dbReference>
<dbReference type="InterPro" id="IPR001075">
    <property type="entry name" value="NIF_FeS_clus_asmbl_NifU_C"/>
</dbReference>
<dbReference type="NCBIfam" id="NF008392">
    <property type="entry name" value="PRK11190.1"/>
    <property type="match status" value="1"/>
</dbReference>
<dbReference type="NCBIfam" id="TIGR03341">
    <property type="entry name" value="YhgI_GntY"/>
    <property type="match status" value="1"/>
</dbReference>
<dbReference type="PANTHER" id="PTHR11178:SF51">
    <property type="entry name" value="FE_S BIOGENESIS PROTEIN NFUA"/>
    <property type="match status" value="1"/>
</dbReference>
<dbReference type="PANTHER" id="PTHR11178">
    <property type="entry name" value="IRON-SULFUR CLUSTER SCAFFOLD PROTEIN NFU-RELATED"/>
    <property type="match status" value="1"/>
</dbReference>
<dbReference type="Pfam" id="PF01521">
    <property type="entry name" value="Fe-S_biosyn"/>
    <property type="match status" value="1"/>
</dbReference>
<dbReference type="Pfam" id="PF01106">
    <property type="entry name" value="NifU"/>
    <property type="match status" value="1"/>
</dbReference>
<dbReference type="SUPFAM" id="SSF117916">
    <property type="entry name" value="Fe-S cluster assembly (FSCA) domain-like"/>
    <property type="match status" value="1"/>
</dbReference>
<dbReference type="SUPFAM" id="SSF89360">
    <property type="entry name" value="HesB-like domain"/>
    <property type="match status" value="1"/>
</dbReference>
<gene>
    <name evidence="1" type="primary">nfuA</name>
    <name type="ordered locus">SNSL254_A3785</name>
</gene>
<organism>
    <name type="scientific">Salmonella newport (strain SL254)</name>
    <dbReference type="NCBI Taxonomy" id="423368"/>
    <lineage>
        <taxon>Bacteria</taxon>
        <taxon>Pseudomonadati</taxon>
        <taxon>Pseudomonadota</taxon>
        <taxon>Gammaproteobacteria</taxon>
        <taxon>Enterobacterales</taxon>
        <taxon>Enterobacteriaceae</taxon>
        <taxon>Salmonella</taxon>
    </lineage>
</organism>
<name>NFUA_SALNS</name>
<accession>B4SVL5</accession>
<sequence>MIRISDAAQAHFAKLLANQEEGTQIRVFVINPGTPNAECGVSYCPPDAVEATDTALKFDLLTAYVDELSAPYLEDAEIDFVTDQLGSQLTLKAPNAKMRKVADDAPLMERVEYALQSQINPQLAGHGGRVSLMEITDEGYAILQFGGGCNGCSMVDVTLKEGIEKQLLNEFPELKGVRDLTEHQRGEHSYY</sequence>